<accession>A3DA48</accession>
<sequence length="206" mass="23439">MARYLGPKLKLSRREGTDLFLKSGVRAIDSKCKLETAPGQHGARKPRLSEYGTQLREKQKVRRIYGVLEKQFRNYYKDAARTKGNTGENLLQLLETRLDNVVYRMGFGATRAESRQLVSHKSIMVNGRVVNIPSFKVSANDVVSIREKSRTQARIKAALEVAAQREKPTWVEVDNAKMEGAFKRVPERSDLSAEINEQLIVELYSK</sequence>
<organism>
    <name type="scientific">Shewanella baltica (strain OS155 / ATCC BAA-1091)</name>
    <dbReference type="NCBI Taxonomy" id="325240"/>
    <lineage>
        <taxon>Bacteria</taxon>
        <taxon>Pseudomonadati</taxon>
        <taxon>Pseudomonadota</taxon>
        <taxon>Gammaproteobacteria</taxon>
        <taxon>Alteromonadales</taxon>
        <taxon>Shewanellaceae</taxon>
        <taxon>Shewanella</taxon>
    </lineage>
</organism>
<keyword id="KW-1185">Reference proteome</keyword>
<keyword id="KW-0687">Ribonucleoprotein</keyword>
<keyword id="KW-0689">Ribosomal protein</keyword>
<keyword id="KW-0694">RNA-binding</keyword>
<keyword id="KW-0699">rRNA-binding</keyword>
<gene>
    <name evidence="1" type="primary">rpsD</name>
    <name type="ordered locus">Sbal_4146</name>
</gene>
<proteinExistence type="inferred from homology"/>
<protein>
    <recommendedName>
        <fullName evidence="1">Small ribosomal subunit protein uS4</fullName>
    </recommendedName>
    <alternativeName>
        <fullName evidence="2">30S ribosomal protein S4</fullName>
    </alternativeName>
</protein>
<name>RS4_SHEB5</name>
<evidence type="ECO:0000255" key="1">
    <source>
        <dbReference type="HAMAP-Rule" id="MF_01306"/>
    </source>
</evidence>
<evidence type="ECO:0000305" key="2"/>
<comment type="function">
    <text evidence="1">One of the primary rRNA binding proteins, it binds directly to 16S rRNA where it nucleates assembly of the body of the 30S subunit.</text>
</comment>
<comment type="function">
    <text evidence="1">With S5 and S12 plays an important role in translational accuracy.</text>
</comment>
<comment type="subunit">
    <text evidence="1">Part of the 30S ribosomal subunit. Contacts protein S5. The interaction surface between S4 and S5 is involved in control of translational fidelity.</text>
</comment>
<comment type="similarity">
    <text evidence="1">Belongs to the universal ribosomal protein uS4 family.</text>
</comment>
<feature type="chain" id="PRO_0000322332" description="Small ribosomal subunit protein uS4">
    <location>
        <begin position="1"/>
        <end position="206"/>
    </location>
</feature>
<feature type="domain" description="S4 RNA-binding" evidence="1">
    <location>
        <begin position="96"/>
        <end position="156"/>
    </location>
</feature>
<dbReference type="EMBL" id="CP000563">
    <property type="protein sequence ID" value="ABN63611.1"/>
    <property type="molecule type" value="Genomic_DNA"/>
</dbReference>
<dbReference type="RefSeq" id="WP_006083575.1">
    <property type="nucleotide sequence ID" value="NC_009052.1"/>
</dbReference>
<dbReference type="SMR" id="A3DA48"/>
<dbReference type="STRING" id="325240.Sbal_4146"/>
<dbReference type="GeneID" id="11770579"/>
<dbReference type="KEGG" id="sbl:Sbal_4146"/>
<dbReference type="HOGENOM" id="CLU_092403_0_2_6"/>
<dbReference type="OrthoDB" id="9803672at2"/>
<dbReference type="Proteomes" id="UP000001557">
    <property type="component" value="Chromosome"/>
</dbReference>
<dbReference type="GO" id="GO:0015935">
    <property type="term" value="C:small ribosomal subunit"/>
    <property type="evidence" value="ECO:0007669"/>
    <property type="project" value="InterPro"/>
</dbReference>
<dbReference type="GO" id="GO:0019843">
    <property type="term" value="F:rRNA binding"/>
    <property type="evidence" value="ECO:0007669"/>
    <property type="project" value="UniProtKB-UniRule"/>
</dbReference>
<dbReference type="GO" id="GO:0003735">
    <property type="term" value="F:structural constituent of ribosome"/>
    <property type="evidence" value="ECO:0007669"/>
    <property type="project" value="InterPro"/>
</dbReference>
<dbReference type="GO" id="GO:0042274">
    <property type="term" value="P:ribosomal small subunit biogenesis"/>
    <property type="evidence" value="ECO:0007669"/>
    <property type="project" value="TreeGrafter"/>
</dbReference>
<dbReference type="GO" id="GO:0006412">
    <property type="term" value="P:translation"/>
    <property type="evidence" value="ECO:0007669"/>
    <property type="project" value="UniProtKB-UniRule"/>
</dbReference>
<dbReference type="CDD" id="cd00165">
    <property type="entry name" value="S4"/>
    <property type="match status" value="1"/>
</dbReference>
<dbReference type="FunFam" id="1.10.1050.10:FF:000001">
    <property type="entry name" value="30S ribosomal protein S4"/>
    <property type="match status" value="1"/>
</dbReference>
<dbReference type="FunFam" id="3.10.290.10:FF:000001">
    <property type="entry name" value="30S ribosomal protein S4"/>
    <property type="match status" value="1"/>
</dbReference>
<dbReference type="Gene3D" id="1.10.1050.10">
    <property type="entry name" value="Ribosomal Protein S4 Delta 41, Chain A, domain 1"/>
    <property type="match status" value="1"/>
</dbReference>
<dbReference type="Gene3D" id="3.10.290.10">
    <property type="entry name" value="RNA-binding S4 domain"/>
    <property type="match status" value="1"/>
</dbReference>
<dbReference type="HAMAP" id="MF_01306_B">
    <property type="entry name" value="Ribosomal_uS4_B"/>
    <property type="match status" value="1"/>
</dbReference>
<dbReference type="InterPro" id="IPR022801">
    <property type="entry name" value="Ribosomal_uS4"/>
</dbReference>
<dbReference type="InterPro" id="IPR005709">
    <property type="entry name" value="Ribosomal_uS4_bac-type"/>
</dbReference>
<dbReference type="InterPro" id="IPR018079">
    <property type="entry name" value="Ribosomal_uS4_CS"/>
</dbReference>
<dbReference type="InterPro" id="IPR001912">
    <property type="entry name" value="Ribosomal_uS4_N"/>
</dbReference>
<dbReference type="InterPro" id="IPR002942">
    <property type="entry name" value="S4_RNA-bd"/>
</dbReference>
<dbReference type="InterPro" id="IPR036986">
    <property type="entry name" value="S4_RNA-bd_sf"/>
</dbReference>
<dbReference type="NCBIfam" id="NF003717">
    <property type="entry name" value="PRK05327.1"/>
    <property type="match status" value="1"/>
</dbReference>
<dbReference type="NCBIfam" id="TIGR01017">
    <property type="entry name" value="rpsD_bact"/>
    <property type="match status" value="1"/>
</dbReference>
<dbReference type="PANTHER" id="PTHR11831">
    <property type="entry name" value="30S 40S RIBOSOMAL PROTEIN"/>
    <property type="match status" value="1"/>
</dbReference>
<dbReference type="PANTHER" id="PTHR11831:SF4">
    <property type="entry name" value="SMALL RIBOSOMAL SUBUNIT PROTEIN US4M"/>
    <property type="match status" value="1"/>
</dbReference>
<dbReference type="Pfam" id="PF00163">
    <property type="entry name" value="Ribosomal_S4"/>
    <property type="match status" value="1"/>
</dbReference>
<dbReference type="Pfam" id="PF01479">
    <property type="entry name" value="S4"/>
    <property type="match status" value="1"/>
</dbReference>
<dbReference type="SMART" id="SM01390">
    <property type="entry name" value="Ribosomal_S4"/>
    <property type="match status" value="1"/>
</dbReference>
<dbReference type="SMART" id="SM00363">
    <property type="entry name" value="S4"/>
    <property type="match status" value="1"/>
</dbReference>
<dbReference type="SUPFAM" id="SSF55174">
    <property type="entry name" value="Alpha-L RNA-binding motif"/>
    <property type="match status" value="1"/>
</dbReference>
<dbReference type="PROSITE" id="PS00632">
    <property type="entry name" value="RIBOSOMAL_S4"/>
    <property type="match status" value="1"/>
</dbReference>
<dbReference type="PROSITE" id="PS50889">
    <property type="entry name" value="S4"/>
    <property type="match status" value="1"/>
</dbReference>
<reference key="1">
    <citation type="submission" date="2007-02" db="EMBL/GenBank/DDBJ databases">
        <title>Complete sequence of chromosome of Shewanella baltica OS155.</title>
        <authorList>
            <consortium name="US DOE Joint Genome Institute"/>
            <person name="Copeland A."/>
            <person name="Lucas S."/>
            <person name="Lapidus A."/>
            <person name="Barry K."/>
            <person name="Detter J.C."/>
            <person name="Glavina del Rio T."/>
            <person name="Hammon N."/>
            <person name="Israni S."/>
            <person name="Dalin E."/>
            <person name="Tice H."/>
            <person name="Pitluck S."/>
            <person name="Sims D.R."/>
            <person name="Brettin T."/>
            <person name="Bruce D."/>
            <person name="Han C."/>
            <person name="Tapia R."/>
            <person name="Brainard J."/>
            <person name="Schmutz J."/>
            <person name="Larimer F."/>
            <person name="Land M."/>
            <person name="Hauser L."/>
            <person name="Kyrpides N."/>
            <person name="Mikhailova N."/>
            <person name="Brettar I."/>
            <person name="Klappenbach J."/>
            <person name="Konstantinidis K."/>
            <person name="Rodrigues J."/>
            <person name="Tiedje J."/>
            <person name="Richardson P."/>
        </authorList>
    </citation>
    <scope>NUCLEOTIDE SEQUENCE [LARGE SCALE GENOMIC DNA]</scope>
    <source>
        <strain>OS155 / ATCC BAA-1091</strain>
    </source>
</reference>